<proteinExistence type="inferred from homology"/>
<reference key="1">
    <citation type="submission" date="2003-08" db="EMBL/GenBank/DDBJ databases">
        <title>The beta-tubulin of Porphyra yezoensis.</title>
        <authorList>
            <person name="Gong Q."/>
            <person name="Yu W."/>
            <person name="Han F."/>
        </authorList>
    </citation>
    <scope>NUCLEOTIDE SEQUENCE [GENOMIC DNA]</scope>
    <source>
        <strain>Qingdao</strain>
    </source>
</reference>
<name>TBB_PYRYE</name>
<dbReference type="EMBL" id="AY221630">
    <property type="protein sequence ID" value="AAO64445.1"/>
    <property type="molecule type" value="Genomic_DNA"/>
</dbReference>
<dbReference type="SMR" id="Q84TG9"/>
<dbReference type="GO" id="GO:0005737">
    <property type="term" value="C:cytoplasm"/>
    <property type="evidence" value="ECO:0007669"/>
    <property type="project" value="UniProtKB-KW"/>
</dbReference>
<dbReference type="GO" id="GO:0005874">
    <property type="term" value="C:microtubule"/>
    <property type="evidence" value="ECO:0007669"/>
    <property type="project" value="UniProtKB-KW"/>
</dbReference>
<dbReference type="GO" id="GO:0005525">
    <property type="term" value="F:GTP binding"/>
    <property type="evidence" value="ECO:0007669"/>
    <property type="project" value="UniProtKB-KW"/>
</dbReference>
<dbReference type="GO" id="GO:0003924">
    <property type="term" value="F:GTPase activity"/>
    <property type="evidence" value="ECO:0007669"/>
    <property type="project" value="InterPro"/>
</dbReference>
<dbReference type="GO" id="GO:0046872">
    <property type="term" value="F:metal ion binding"/>
    <property type="evidence" value="ECO:0007669"/>
    <property type="project" value="UniProtKB-KW"/>
</dbReference>
<dbReference type="GO" id="GO:0005200">
    <property type="term" value="F:structural constituent of cytoskeleton"/>
    <property type="evidence" value="ECO:0007669"/>
    <property type="project" value="InterPro"/>
</dbReference>
<dbReference type="GO" id="GO:0007017">
    <property type="term" value="P:microtubule-based process"/>
    <property type="evidence" value="ECO:0007669"/>
    <property type="project" value="InterPro"/>
</dbReference>
<dbReference type="CDD" id="cd02187">
    <property type="entry name" value="beta_tubulin"/>
    <property type="match status" value="1"/>
</dbReference>
<dbReference type="FunFam" id="1.10.287.600:FF:000013">
    <property type="entry name" value="Tubulin beta chain"/>
    <property type="match status" value="1"/>
</dbReference>
<dbReference type="FunFam" id="3.30.1330.20:FF:000009">
    <property type="entry name" value="Tubulin beta chain"/>
    <property type="match status" value="1"/>
</dbReference>
<dbReference type="FunFam" id="3.40.50.1440:FF:000006">
    <property type="entry name" value="Tubulin beta chain"/>
    <property type="match status" value="1"/>
</dbReference>
<dbReference type="Gene3D" id="1.10.287.600">
    <property type="entry name" value="Helix hairpin bin"/>
    <property type="match status" value="1"/>
</dbReference>
<dbReference type="Gene3D" id="3.30.1330.20">
    <property type="entry name" value="Tubulin/FtsZ, C-terminal domain"/>
    <property type="match status" value="1"/>
</dbReference>
<dbReference type="Gene3D" id="3.40.50.1440">
    <property type="entry name" value="Tubulin/FtsZ, GTPase domain"/>
    <property type="match status" value="1"/>
</dbReference>
<dbReference type="InterPro" id="IPR013838">
    <property type="entry name" value="Beta-tubulin_BS"/>
</dbReference>
<dbReference type="InterPro" id="IPR002453">
    <property type="entry name" value="Beta_tubulin"/>
</dbReference>
<dbReference type="InterPro" id="IPR008280">
    <property type="entry name" value="Tub_FtsZ_C"/>
</dbReference>
<dbReference type="InterPro" id="IPR000217">
    <property type="entry name" value="Tubulin"/>
</dbReference>
<dbReference type="InterPro" id="IPR037103">
    <property type="entry name" value="Tubulin/FtsZ-like_C"/>
</dbReference>
<dbReference type="InterPro" id="IPR018316">
    <property type="entry name" value="Tubulin/FtsZ_2-layer-sand-dom"/>
</dbReference>
<dbReference type="InterPro" id="IPR036525">
    <property type="entry name" value="Tubulin/FtsZ_GTPase_sf"/>
</dbReference>
<dbReference type="InterPro" id="IPR023123">
    <property type="entry name" value="Tubulin_C"/>
</dbReference>
<dbReference type="InterPro" id="IPR017975">
    <property type="entry name" value="Tubulin_CS"/>
</dbReference>
<dbReference type="InterPro" id="IPR003008">
    <property type="entry name" value="Tubulin_FtsZ_GTPase"/>
</dbReference>
<dbReference type="PANTHER" id="PTHR11588">
    <property type="entry name" value="TUBULIN"/>
    <property type="match status" value="1"/>
</dbReference>
<dbReference type="Pfam" id="PF00091">
    <property type="entry name" value="Tubulin"/>
    <property type="match status" value="1"/>
</dbReference>
<dbReference type="Pfam" id="PF03953">
    <property type="entry name" value="Tubulin_C"/>
    <property type="match status" value="1"/>
</dbReference>
<dbReference type="PRINTS" id="PR01163">
    <property type="entry name" value="BETATUBULIN"/>
</dbReference>
<dbReference type="PRINTS" id="PR01161">
    <property type="entry name" value="TUBULIN"/>
</dbReference>
<dbReference type="SMART" id="SM00864">
    <property type="entry name" value="Tubulin"/>
    <property type="match status" value="1"/>
</dbReference>
<dbReference type="SMART" id="SM00865">
    <property type="entry name" value="Tubulin_C"/>
    <property type="match status" value="1"/>
</dbReference>
<dbReference type="SUPFAM" id="SSF55307">
    <property type="entry name" value="Tubulin C-terminal domain-like"/>
    <property type="match status" value="1"/>
</dbReference>
<dbReference type="SUPFAM" id="SSF52490">
    <property type="entry name" value="Tubulin nucleotide-binding domain-like"/>
    <property type="match status" value="1"/>
</dbReference>
<dbReference type="PROSITE" id="PS00227">
    <property type="entry name" value="TUBULIN"/>
    <property type="match status" value="1"/>
</dbReference>
<dbReference type="PROSITE" id="PS00228">
    <property type="entry name" value="TUBULIN_B_AUTOREG"/>
    <property type="match status" value="1"/>
</dbReference>
<evidence type="ECO:0000250" key="1">
    <source>
        <dbReference type="UniProtKB" id="P68363"/>
    </source>
</evidence>
<evidence type="ECO:0000250" key="2">
    <source>
        <dbReference type="UniProtKB" id="Q13509"/>
    </source>
</evidence>
<evidence type="ECO:0000256" key="3">
    <source>
        <dbReference type="SAM" id="MobiDB-lite"/>
    </source>
</evidence>
<evidence type="ECO:0000305" key="4"/>
<keyword id="KW-0963">Cytoplasm</keyword>
<keyword id="KW-0206">Cytoskeleton</keyword>
<keyword id="KW-0342">GTP-binding</keyword>
<keyword id="KW-0460">Magnesium</keyword>
<keyword id="KW-0479">Metal-binding</keyword>
<keyword id="KW-0493">Microtubule</keyword>
<keyword id="KW-0547">Nucleotide-binding</keyword>
<sequence>MREIVHIQAGQCGNQIGAKFWEVISEEHGIDSSGAYIGTSDLQLDRAEVYYNEGSGGRYVPRAVLVDLEPGVLDTIKAGPHGGLYRPDNFVAGQSGAGNNWAKGHYTEGAELVDSVLDVVRREAEGCDCLQGFQVTHSLGGGTGSGMGTLLVSKIREEFPDRMMCTYSVMPSPKVSDTVVEPYNCTLSVHQLVENADAVFCIDNEALYNICYNTLKKPEPAYPDLNKLVSGVMSGITSSLRFPGQLNSDLRKLAVNLVPFPRLHFFMIGYAPLSADGVTAYRAKTVADLTKQMFDPKNMMADCDPRNGRYLTASAYFRGKVSTKEVEEQMDAIQTKNSGQFIDWIPNAIKASVCDVAPTGETMSAAFIGNSTAIQDIFKRVGSHFSAMFKRKAFLHWYTGEGMDEMEFTEAESNMNDLVSELQQYEAATVEGEEEEDEYAEGGVVNGDQSYDEPYQAA</sequence>
<comment type="function">
    <text>Tubulin is the major constituent of microtubules, a cylinder consisting of laterally associated linear protofilaments composed of alpha- and beta-tubulin heterodimers. Microtubules grow by the addition of GTP-tubulin dimers to the microtubule end, where a stabilizing cap forms. Below the cap, tubulin dimers are in GDP-bound state, owing to GTPase activity of alpha-tubulin.</text>
</comment>
<comment type="cofactor">
    <cofactor evidence="1">
        <name>Mg(2+)</name>
        <dbReference type="ChEBI" id="CHEBI:18420"/>
    </cofactor>
</comment>
<comment type="subunit">
    <text>Dimer of alpha and beta chains. A typical microtubule is a hollow water-filled tube with an outer diameter of 25 nm and an inner diameter of 15 nM. Alpha-beta heterodimers associate head-to-tail to form protofilaments running lengthwise along the microtubule wall with the beta-tubulin subunit facing the microtubule plus end conferring a structural polarity. Microtubules usually have 13 protofilaments but different protofilament numbers can be found in some organisms and specialized cells.</text>
</comment>
<comment type="subcellular location">
    <subcellularLocation>
        <location>Cytoplasm</location>
        <location>Cytoskeleton</location>
    </subcellularLocation>
</comment>
<comment type="similarity">
    <text evidence="4">Belongs to the tubulin family.</text>
</comment>
<organism>
    <name type="scientific">Pyropia yezoensis</name>
    <name type="common">Susabi-nori</name>
    <name type="synonym">Porphyra yezoensis</name>
    <dbReference type="NCBI Taxonomy" id="2788"/>
    <lineage>
        <taxon>Eukaryota</taxon>
        <taxon>Rhodophyta</taxon>
        <taxon>Bangiophyceae</taxon>
        <taxon>Bangiales</taxon>
        <taxon>Bangiaceae</taxon>
        <taxon>Pyropia</taxon>
    </lineage>
</organism>
<gene>
    <name type="primary">TUBB1</name>
</gene>
<accession>Q84TG9</accession>
<feature type="chain" id="PRO_0000277323" description="Tubulin beta chain">
    <location>
        <begin position="1"/>
        <end position="458"/>
    </location>
</feature>
<feature type="region of interest" description="Disordered" evidence="3">
    <location>
        <begin position="426"/>
        <end position="458"/>
    </location>
</feature>
<feature type="compositionally biased region" description="Acidic residues" evidence="3">
    <location>
        <begin position="431"/>
        <end position="440"/>
    </location>
</feature>
<feature type="binding site" evidence="2">
    <location>
        <position position="11"/>
    </location>
    <ligand>
        <name>GTP</name>
        <dbReference type="ChEBI" id="CHEBI:37565"/>
    </ligand>
</feature>
<feature type="binding site" evidence="1">
    <location>
        <position position="69"/>
    </location>
    <ligand>
        <name>GTP</name>
        <dbReference type="ChEBI" id="CHEBI:37565"/>
    </ligand>
</feature>
<feature type="binding site" evidence="1">
    <location>
        <position position="69"/>
    </location>
    <ligand>
        <name>Mg(2+)</name>
        <dbReference type="ChEBI" id="CHEBI:18420"/>
    </ligand>
</feature>
<feature type="binding site" evidence="2">
    <location>
        <position position="138"/>
    </location>
    <ligand>
        <name>GTP</name>
        <dbReference type="ChEBI" id="CHEBI:37565"/>
    </ligand>
</feature>
<feature type="binding site" evidence="2">
    <location>
        <position position="142"/>
    </location>
    <ligand>
        <name>GTP</name>
        <dbReference type="ChEBI" id="CHEBI:37565"/>
    </ligand>
</feature>
<feature type="binding site" evidence="2">
    <location>
        <position position="143"/>
    </location>
    <ligand>
        <name>GTP</name>
        <dbReference type="ChEBI" id="CHEBI:37565"/>
    </ligand>
</feature>
<feature type="binding site" evidence="2">
    <location>
        <position position="144"/>
    </location>
    <ligand>
        <name>GTP</name>
        <dbReference type="ChEBI" id="CHEBI:37565"/>
    </ligand>
</feature>
<feature type="binding site" evidence="2">
    <location>
        <position position="204"/>
    </location>
    <ligand>
        <name>GTP</name>
        <dbReference type="ChEBI" id="CHEBI:37565"/>
    </ligand>
</feature>
<feature type="binding site" evidence="2">
    <location>
        <position position="226"/>
    </location>
    <ligand>
        <name>GTP</name>
        <dbReference type="ChEBI" id="CHEBI:37565"/>
    </ligand>
</feature>
<protein>
    <recommendedName>
        <fullName>Tubulin beta chain</fullName>
    </recommendedName>
    <alternativeName>
        <fullName>Beta-tubulin</fullName>
    </alternativeName>
</protein>